<organism>
    <name type="scientific">Geobacillus thermodenitrificans (strain NG80-2)</name>
    <dbReference type="NCBI Taxonomy" id="420246"/>
    <lineage>
        <taxon>Bacteria</taxon>
        <taxon>Bacillati</taxon>
        <taxon>Bacillota</taxon>
        <taxon>Bacilli</taxon>
        <taxon>Bacillales</taxon>
        <taxon>Anoxybacillaceae</taxon>
        <taxon>Geobacillus</taxon>
    </lineage>
</organism>
<name>AROK_GEOTN</name>
<accession>A4IPN9</accession>
<keyword id="KW-0028">Amino-acid biosynthesis</keyword>
<keyword id="KW-0057">Aromatic amino acid biosynthesis</keyword>
<keyword id="KW-0067">ATP-binding</keyword>
<keyword id="KW-0963">Cytoplasm</keyword>
<keyword id="KW-0418">Kinase</keyword>
<keyword id="KW-0460">Magnesium</keyword>
<keyword id="KW-0479">Metal-binding</keyword>
<keyword id="KW-0547">Nucleotide-binding</keyword>
<keyword id="KW-0808">Transferase</keyword>
<sequence>MEKQTAIPLRERNIILIGFMGAGKTTIGQLVAKKLYRDFIDVDAEIERRQGMSIPEIFAQKGEAYFRKVERELIVDLCTNTRLKILSLGGGAYLQEEVRRACLAHGIVFFLDLSWDYWKEERLPLIVDSRPVLKNKTLEEVEQLFFQRQSAYALHHSRVVINELEAEQAADQIVESIKWMWDVYEPNR</sequence>
<gene>
    <name evidence="1" type="primary">aroK</name>
    <name type="ordered locus">GTNG_1938</name>
</gene>
<protein>
    <recommendedName>
        <fullName evidence="1">Shikimate kinase</fullName>
        <shortName evidence="1">SK</shortName>
        <ecNumber evidence="1">2.7.1.71</ecNumber>
    </recommendedName>
</protein>
<dbReference type="EC" id="2.7.1.71" evidence="1"/>
<dbReference type="EMBL" id="CP000557">
    <property type="protein sequence ID" value="ABO67293.1"/>
    <property type="molecule type" value="Genomic_DNA"/>
</dbReference>
<dbReference type="RefSeq" id="WP_008880590.1">
    <property type="nucleotide sequence ID" value="NC_009328.1"/>
</dbReference>
<dbReference type="SMR" id="A4IPN9"/>
<dbReference type="KEGG" id="gtn:GTNG_1938"/>
<dbReference type="eggNOG" id="COG0703">
    <property type="taxonomic scope" value="Bacteria"/>
</dbReference>
<dbReference type="HOGENOM" id="CLU_057607_4_0_9"/>
<dbReference type="UniPathway" id="UPA00053">
    <property type="reaction ID" value="UER00088"/>
</dbReference>
<dbReference type="Proteomes" id="UP000001578">
    <property type="component" value="Chromosome"/>
</dbReference>
<dbReference type="GO" id="GO:0005829">
    <property type="term" value="C:cytosol"/>
    <property type="evidence" value="ECO:0007669"/>
    <property type="project" value="TreeGrafter"/>
</dbReference>
<dbReference type="GO" id="GO:0005524">
    <property type="term" value="F:ATP binding"/>
    <property type="evidence" value="ECO:0007669"/>
    <property type="project" value="UniProtKB-UniRule"/>
</dbReference>
<dbReference type="GO" id="GO:0000287">
    <property type="term" value="F:magnesium ion binding"/>
    <property type="evidence" value="ECO:0007669"/>
    <property type="project" value="UniProtKB-UniRule"/>
</dbReference>
<dbReference type="GO" id="GO:0004765">
    <property type="term" value="F:shikimate kinase activity"/>
    <property type="evidence" value="ECO:0007669"/>
    <property type="project" value="UniProtKB-UniRule"/>
</dbReference>
<dbReference type="GO" id="GO:0008652">
    <property type="term" value="P:amino acid biosynthetic process"/>
    <property type="evidence" value="ECO:0007669"/>
    <property type="project" value="UniProtKB-KW"/>
</dbReference>
<dbReference type="GO" id="GO:0009073">
    <property type="term" value="P:aromatic amino acid family biosynthetic process"/>
    <property type="evidence" value="ECO:0007669"/>
    <property type="project" value="UniProtKB-KW"/>
</dbReference>
<dbReference type="GO" id="GO:0009423">
    <property type="term" value="P:chorismate biosynthetic process"/>
    <property type="evidence" value="ECO:0007669"/>
    <property type="project" value="UniProtKB-UniRule"/>
</dbReference>
<dbReference type="CDD" id="cd00464">
    <property type="entry name" value="SK"/>
    <property type="match status" value="1"/>
</dbReference>
<dbReference type="Gene3D" id="3.40.50.300">
    <property type="entry name" value="P-loop containing nucleotide triphosphate hydrolases"/>
    <property type="match status" value="1"/>
</dbReference>
<dbReference type="HAMAP" id="MF_00109">
    <property type="entry name" value="Shikimate_kinase"/>
    <property type="match status" value="1"/>
</dbReference>
<dbReference type="InterPro" id="IPR027417">
    <property type="entry name" value="P-loop_NTPase"/>
</dbReference>
<dbReference type="InterPro" id="IPR031322">
    <property type="entry name" value="Shikimate/glucono_kinase"/>
</dbReference>
<dbReference type="InterPro" id="IPR000623">
    <property type="entry name" value="Shikimate_kinase/TSH1"/>
</dbReference>
<dbReference type="PANTHER" id="PTHR21087">
    <property type="entry name" value="SHIKIMATE KINASE"/>
    <property type="match status" value="1"/>
</dbReference>
<dbReference type="PANTHER" id="PTHR21087:SF16">
    <property type="entry name" value="SHIKIMATE KINASE 1, CHLOROPLASTIC"/>
    <property type="match status" value="1"/>
</dbReference>
<dbReference type="Pfam" id="PF01202">
    <property type="entry name" value="SKI"/>
    <property type="match status" value="1"/>
</dbReference>
<dbReference type="PRINTS" id="PR01100">
    <property type="entry name" value="SHIKIMTKNASE"/>
</dbReference>
<dbReference type="SUPFAM" id="SSF52540">
    <property type="entry name" value="P-loop containing nucleoside triphosphate hydrolases"/>
    <property type="match status" value="1"/>
</dbReference>
<comment type="function">
    <text evidence="1">Catalyzes the specific phosphorylation of the 3-hydroxyl group of shikimic acid using ATP as a cosubstrate.</text>
</comment>
<comment type="catalytic activity">
    <reaction evidence="1">
        <text>shikimate + ATP = 3-phosphoshikimate + ADP + H(+)</text>
        <dbReference type="Rhea" id="RHEA:13121"/>
        <dbReference type="ChEBI" id="CHEBI:15378"/>
        <dbReference type="ChEBI" id="CHEBI:30616"/>
        <dbReference type="ChEBI" id="CHEBI:36208"/>
        <dbReference type="ChEBI" id="CHEBI:145989"/>
        <dbReference type="ChEBI" id="CHEBI:456216"/>
        <dbReference type="EC" id="2.7.1.71"/>
    </reaction>
</comment>
<comment type="cofactor">
    <cofactor evidence="1">
        <name>Mg(2+)</name>
        <dbReference type="ChEBI" id="CHEBI:18420"/>
    </cofactor>
    <text evidence="1">Binds 1 Mg(2+) ion per subunit.</text>
</comment>
<comment type="pathway">
    <text evidence="1">Metabolic intermediate biosynthesis; chorismate biosynthesis; chorismate from D-erythrose 4-phosphate and phosphoenolpyruvate: step 5/7.</text>
</comment>
<comment type="subunit">
    <text evidence="1">Monomer.</text>
</comment>
<comment type="subcellular location">
    <subcellularLocation>
        <location evidence="1">Cytoplasm</location>
    </subcellularLocation>
</comment>
<comment type="similarity">
    <text evidence="1">Belongs to the shikimate kinase family.</text>
</comment>
<evidence type="ECO:0000255" key="1">
    <source>
        <dbReference type="HAMAP-Rule" id="MF_00109"/>
    </source>
</evidence>
<feature type="chain" id="PRO_1000022974" description="Shikimate kinase">
    <location>
        <begin position="1"/>
        <end position="188"/>
    </location>
</feature>
<feature type="binding site" evidence="1">
    <location>
        <begin position="21"/>
        <end position="26"/>
    </location>
    <ligand>
        <name>ATP</name>
        <dbReference type="ChEBI" id="CHEBI:30616"/>
    </ligand>
</feature>
<feature type="binding site" evidence="1">
    <location>
        <position position="25"/>
    </location>
    <ligand>
        <name>Mg(2+)</name>
        <dbReference type="ChEBI" id="CHEBI:18420"/>
    </ligand>
</feature>
<feature type="binding site" evidence="1">
    <location>
        <position position="43"/>
    </location>
    <ligand>
        <name>substrate</name>
    </ligand>
</feature>
<feature type="binding site" evidence="1">
    <location>
        <position position="67"/>
    </location>
    <ligand>
        <name>substrate</name>
    </ligand>
</feature>
<feature type="binding site" evidence="1">
    <location>
        <position position="90"/>
    </location>
    <ligand>
        <name>substrate</name>
    </ligand>
</feature>
<feature type="binding site" evidence="1">
    <location>
        <position position="130"/>
    </location>
    <ligand>
        <name>ATP</name>
        <dbReference type="ChEBI" id="CHEBI:30616"/>
    </ligand>
</feature>
<feature type="binding site" evidence="1">
    <location>
        <position position="148"/>
    </location>
    <ligand>
        <name>substrate</name>
    </ligand>
</feature>
<proteinExistence type="inferred from homology"/>
<reference key="1">
    <citation type="journal article" date="2007" name="Proc. Natl. Acad. Sci. U.S.A.">
        <title>Genome and proteome of long-chain alkane degrading Geobacillus thermodenitrificans NG80-2 isolated from a deep-subsurface oil reservoir.</title>
        <authorList>
            <person name="Feng L."/>
            <person name="Wang W."/>
            <person name="Cheng J."/>
            <person name="Ren Y."/>
            <person name="Zhao G."/>
            <person name="Gao C."/>
            <person name="Tang Y."/>
            <person name="Liu X."/>
            <person name="Han W."/>
            <person name="Peng X."/>
            <person name="Liu R."/>
            <person name="Wang L."/>
        </authorList>
    </citation>
    <scope>NUCLEOTIDE SEQUENCE [LARGE SCALE GENOMIC DNA]</scope>
    <source>
        <strain>NG80-2</strain>
    </source>
</reference>